<feature type="chain" id="PRO_0000352142" description="Small ribosomal subunit protein uS2c">
    <location>
        <begin position="1"/>
        <end position="236"/>
    </location>
</feature>
<proteinExistence type="inferred from homology"/>
<comment type="subcellular location">
    <subcellularLocation>
        <location>Plastid</location>
        <location>Chloroplast</location>
    </subcellularLocation>
</comment>
<comment type="similarity">
    <text evidence="1">Belongs to the universal ribosomal protein uS2 family.</text>
</comment>
<dbReference type="EMBL" id="AP009368">
    <property type="protein sequence ID" value="BAF49928.1"/>
    <property type="molecule type" value="Genomic_DNA"/>
</dbReference>
<dbReference type="RefSeq" id="YP_001123104.1">
    <property type="nucleotide sequence ID" value="NC_009267.1"/>
</dbReference>
<dbReference type="SMR" id="A4QJS2"/>
<dbReference type="GeneID" id="4962426"/>
<dbReference type="GO" id="GO:0009507">
    <property type="term" value="C:chloroplast"/>
    <property type="evidence" value="ECO:0007669"/>
    <property type="project" value="UniProtKB-SubCell"/>
</dbReference>
<dbReference type="GO" id="GO:0005763">
    <property type="term" value="C:mitochondrial small ribosomal subunit"/>
    <property type="evidence" value="ECO:0007669"/>
    <property type="project" value="TreeGrafter"/>
</dbReference>
<dbReference type="GO" id="GO:0003735">
    <property type="term" value="F:structural constituent of ribosome"/>
    <property type="evidence" value="ECO:0007669"/>
    <property type="project" value="InterPro"/>
</dbReference>
<dbReference type="GO" id="GO:0006412">
    <property type="term" value="P:translation"/>
    <property type="evidence" value="ECO:0007669"/>
    <property type="project" value="UniProtKB-UniRule"/>
</dbReference>
<dbReference type="CDD" id="cd01425">
    <property type="entry name" value="RPS2"/>
    <property type="match status" value="1"/>
</dbReference>
<dbReference type="FunFam" id="3.40.50.10490:FF:000101">
    <property type="match status" value="1"/>
</dbReference>
<dbReference type="FunFam" id="1.10.287.610:FF:000001">
    <property type="entry name" value="30S ribosomal protein S2"/>
    <property type="match status" value="1"/>
</dbReference>
<dbReference type="Gene3D" id="3.40.50.10490">
    <property type="entry name" value="Glucose-6-phosphate isomerase like protein, domain 1"/>
    <property type="match status" value="1"/>
</dbReference>
<dbReference type="Gene3D" id="1.10.287.610">
    <property type="entry name" value="Helix hairpin bin"/>
    <property type="match status" value="1"/>
</dbReference>
<dbReference type="HAMAP" id="MF_00291_B">
    <property type="entry name" value="Ribosomal_uS2_B"/>
    <property type="match status" value="1"/>
</dbReference>
<dbReference type="InterPro" id="IPR001865">
    <property type="entry name" value="Ribosomal_uS2"/>
</dbReference>
<dbReference type="InterPro" id="IPR005706">
    <property type="entry name" value="Ribosomal_uS2_bac/mit/plastid"/>
</dbReference>
<dbReference type="InterPro" id="IPR018130">
    <property type="entry name" value="Ribosomal_uS2_CS"/>
</dbReference>
<dbReference type="InterPro" id="IPR023591">
    <property type="entry name" value="Ribosomal_uS2_flav_dom_sf"/>
</dbReference>
<dbReference type="NCBIfam" id="TIGR01011">
    <property type="entry name" value="rpsB_bact"/>
    <property type="match status" value="1"/>
</dbReference>
<dbReference type="PANTHER" id="PTHR12534">
    <property type="entry name" value="30S RIBOSOMAL PROTEIN S2 PROKARYOTIC AND ORGANELLAR"/>
    <property type="match status" value="1"/>
</dbReference>
<dbReference type="PANTHER" id="PTHR12534:SF0">
    <property type="entry name" value="SMALL RIBOSOMAL SUBUNIT PROTEIN US2M"/>
    <property type="match status" value="1"/>
</dbReference>
<dbReference type="Pfam" id="PF00318">
    <property type="entry name" value="Ribosomal_S2"/>
    <property type="match status" value="1"/>
</dbReference>
<dbReference type="PRINTS" id="PR00395">
    <property type="entry name" value="RIBOSOMALS2"/>
</dbReference>
<dbReference type="SUPFAM" id="SSF52313">
    <property type="entry name" value="Ribosomal protein S2"/>
    <property type="match status" value="1"/>
</dbReference>
<dbReference type="PROSITE" id="PS00962">
    <property type="entry name" value="RIBOSOMAL_S2_1"/>
    <property type="match status" value="1"/>
</dbReference>
<dbReference type="PROSITE" id="PS00963">
    <property type="entry name" value="RIBOSOMAL_S2_2"/>
    <property type="match status" value="1"/>
</dbReference>
<keyword id="KW-0150">Chloroplast</keyword>
<keyword id="KW-0934">Plastid</keyword>
<keyword id="KW-0687">Ribonucleoprotein</keyword>
<keyword id="KW-0689">Ribosomal protein</keyword>
<sequence>MTKRYWNIDLEEMMRAGVHFGHGTRKWNPRMAPYISAKRKGIHIINLTRTARFLSEACDLVFDAASRGKQFLIVGTKNKAADLVSRAAIRARCHYVNKKWLGGMLTNWSTTEKRLHKFRDLRTEQKTEGFNRLPKRDAAVLKRQLSRLETYLGGIKYMTGLPDIVIILDQQEEYTALRECITLGIPTISLIDTNCNPDLADISIPANDDAIASIRFILNKLVFAICEGRSSYIQNS</sequence>
<protein>
    <recommendedName>
        <fullName evidence="1">Small ribosomal subunit protein uS2c</fullName>
    </recommendedName>
    <alternativeName>
        <fullName>30S ribosomal protein S2, chloroplastic</fullName>
    </alternativeName>
</protein>
<name>RR2_OLIPU</name>
<geneLocation type="chloroplast"/>
<evidence type="ECO:0000305" key="1"/>
<organism>
    <name type="scientific">Olimarabidopsis pumila</name>
    <name type="common">Dwarf rocket</name>
    <name type="synonym">Arabidopsis griffithiana</name>
    <dbReference type="NCBI Taxonomy" id="74718"/>
    <lineage>
        <taxon>Eukaryota</taxon>
        <taxon>Viridiplantae</taxon>
        <taxon>Streptophyta</taxon>
        <taxon>Embryophyta</taxon>
        <taxon>Tracheophyta</taxon>
        <taxon>Spermatophyta</taxon>
        <taxon>Magnoliopsida</taxon>
        <taxon>eudicotyledons</taxon>
        <taxon>Gunneridae</taxon>
        <taxon>Pentapetalae</taxon>
        <taxon>rosids</taxon>
        <taxon>malvids</taxon>
        <taxon>Brassicales</taxon>
        <taxon>Brassicaceae</taxon>
        <taxon>Alyssopsideae</taxon>
        <taxon>Olimarabidopsis</taxon>
    </lineage>
</organism>
<reference key="1">
    <citation type="submission" date="2007-03" db="EMBL/GenBank/DDBJ databases">
        <title>Sequence analysis of Arabidopsis pumila JS2 chloroplast DNA.</title>
        <authorList>
            <person name="Hosouchi T."/>
            <person name="Tsuruoka H."/>
            <person name="Kotani H."/>
        </authorList>
    </citation>
    <scope>NUCLEOTIDE SEQUENCE [LARGE SCALE GENOMIC DNA]</scope>
</reference>
<gene>
    <name type="primary">rps2</name>
</gene>
<accession>A4QJS2</accession>